<reference key="1">
    <citation type="journal article" date="2006" name="Nat. Biotechnol.">
        <title>The genome and transcriptomes of the anti-tumor agent Clostridium novyi-NT.</title>
        <authorList>
            <person name="Bettegowda C."/>
            <person name="Huang X."/>
            <person name="Lin J."/>
            <person name="Cheong I."/>
            <person name="Kohli M."/>
            <person name="Szabo S.A."/>
            <person name="Zhang X."/>
            <person name="Diaz L.A. Jr."/>
            <person name="Velculescu V.E."/>
            <person name="Parmigiani G."/>
            <person name="Kinzler K.W."/>
            <person name="Vogelstein B."/>
            <person name="Zhou S."/>
        </authorList>
    </citation>
    <scope>NUCLEOTIDE SEQUENCE [LARGE SCALE GENOMIC DNA]</scope>
    <source>
        <strain>NT</strain>
    </source>
</reference>
<proteinExistence type="inferred from homology"/>
<comment type="function">
    <text evidence="1">NAD-binding protein involved in the addition of a carboxymethylaminomethyl (cmnm) group at the wobble position (U34) of certain tRNAs, forming tRNA-cmnm(5)s(2)U34.</text>
</comment>
<comment type="cofactor">
    <cofactor evidence="1">
        <name>FAD</name>
        <dbReference type="ChEBI" id="CHEBI:57692"/>
    </cofactor>
</comment>
<comment type="subunit">
    <text evidence="1">Homodimer. Heterotetramer of two MnmE and two MnmG subunits.</text>
</comment>
<comment type="subcellular location">
    <subcellularLocation>
        <location evidence="1">Cytoplasm</location>
    </subcellularLocation>
</comment>
<comment type="similarity">
    <text evidence="1">Belongs to the MnmG family.</text>
</comment>
<gene>
    <name evidence="1" type="primary">mnmG</name>
    <name evidence="1" type="synonym">gidA</name>
    <name type="ordered locus">NT01CX_0874</name>
</gene>
<protein>
    <recommendedName>
        <fullName evidence="1">tRNA uridine 5-carboxymethylaminomethyl modification enzyme MnmG</fullName>
    </recommendedName>
    <alternativeName>
        <fullName evidence="1">Glucose-inhibited division protein A</fullName>
    </alternativeName>
</protein>
<name>MNMG_CLONN</name>
<organism>
    <name type="scientific">Clostridium novyi (strain NT)</name>
    <dbReference type="NCBI Taxonomy" id="386415"/>
    <lineage>
        <taxon>Bacteria</taxon>
        <taxon>Bacillati</taxon>
        <taxon>Bacillota</taxon>
        <taxon>Clostridia</taxon>
        <taxon>Eubacteriales</taxon>
        <taxon>Clostridiaceae</taxon>
        <taxon>Clostridium</taxon>
    </lineage>
</organism>
<dbReference type="EMBL" id="CP000382">
    <property type="protein sequence ID" value="ABK61222.1"/>
    <property type="molecule type" value="Genomic_DNA"/>
</dbReference>
<dbReference type="RefSeq" id="WP_011721001.1">
    <property type="nucleotide sequence ID" value="NC_008593.1"/>
</dbReference>
<dbReference type="SMR" id="A0PX78"/>
<dbReference type="STRING" id="386415.NT01CX_0874"/>
<dbReference type="KEGG" id="cno:NT01CX_0874"/>
<dbReference type="eggNOG" id="COG0445">
    <property type="taxonomic scope" value="Bacteria"/>
</dbReference>
<dbReference type="HOGENOM" id="CLU_007831_2_2_9"/>
<dbReference type="Proteomes" id="UP000008220">
    <property type="component" value="Chromosome"/>
</dbReference>
<dbReference type="GO" id="GO:0005829">
    <property type="term" value="C:cytosol"/>
    <property type="evidence" value="ECO:0007669"/>
    <property type="project" value="TreeGrafter"/>
</dbReference>
<dbReference type="GO" id="GO:0050660">
    <property type="term" value="F:flavin adenine dinucleotide binding"/>
    <property type="evidence" value="ECO:0007669"/>
    <property type="project" value="UniProtKB-UniRule"/>
</dbReference>
<dbReference type="GO" id="GO:0030488">
    <property type="term" value="P:tRNA methylation"/>
    <property type="evidence" value="ECO:0007669"/>
    <property type="project" value="TreeGrafter"/>
</dbReference>
<dbReference type="GO" id="GO:0002098">
    <property type="term" value="P:tRNA wobble uridine modification"/>
    <property type="evidence" value="ECO:0007669"/>
    <property type="project" value="InterPro"/>
</dbReference>
<dbReference type="FunFam" id="1.10.10.1800:FF:000001">
    <property type="entry name" value="tRNA uridine 5-carboxymethylaminomethyl modification enzyme MnmG"/>
    <property type="match status" value="1"/>
</dbReference>
<dbReference type="FunFam" id="1.10.150.570:FF:000001">
    <property type="entry name" value="tRNA uridine 5-carboxymethylaminomethyl modification enzyme MnmG"/>
    <property type="match status" value="1"/>
</dbReference>
<dbReference type="FunFam" id="3.50.50.60:FF:000002">
    <property type="entry name" value="tRNA uridine 5-carboxymethylaminomethyl modification enzyme MnmG"/>
    <property type="match status" value="1"/>
</dbReference>
<dbReference type="Gene3D" id="3.50.50.60">
    <property type="entry name" value="FAD/NAD(P)-binding domain"/>
    <property type="match status" value="2"/>
</dbReference>
<dbReference type="Gene3D" id="1.10.150.570">
    <property type="entry name" value="GidA associated domain, C-terminal subdomain"/>
    <property type="match status" value="1"/>
</dbReference>
<dbReference type="Gene3D" id="1.10.10.1800">
    <property type="entry name" value="tRNA uridine 5-carboxymethylaminomethyl modification enzyme MnmG/GidA"/>
    <property type="match status" value="1"/>
</dbReference>
<dbReference type="HAMAP" id="MF_00129">
    <property type="entry name" value="MnmG_GidA"/>
    <property type="match status" value="1"/>
</dbReference>
<dbReference type="InterPro" id="IPR036188">
    <property type="entry name" value="FAD/NAD-bd_sf"/>
</dbReference>
<dbReference type="InterPro" id="IPR049312">
    <property type="entry name" value="GIDA_C_N"/>
</dbReference>
<dbReference type="InterPro" id="IPR004416">
    <property type="entry name" value="MnmG"/>
</dbReference>
<dbReference type="InterPro" id="IPR002218">
    <property type="entry name" value="MnmG-rel"/>
</dbReference>
<dbReference type="InterPro" id="IPR020595">
    <property type="entry name" value="MnmG-rel_CS"/>
</dbReference>
<dbReference type="InterPro" id="IPR026904">
    <property type="entry name" value="MnmG_C"/>
</dbReference>
<dbReference type="InterPro" id="IPR047001">
    <property type="entry name" value="MnmG_C_subdom"/>
</dbReference>
<dbReference type="InterPro" id="IPR044920">
    <property type="entry name" value="MnmG_C_subdom_sf"/>
</dbReference>
<dbReference type="InterPro" id="IPR040131">
    <property type="entry name" value="MnmG_N"/>
</dbReference>
<dbReference type="NCBIfam" id="TIGR00136">
    <property type="entry name" value="mnmG_gidA"/>
    <property type="match status" value="1"/>
</dbReference>
<dbReference type="PANTHER" id="PTHR11806">
    <property type="entry name" value="GLUCOSE INHIBITED DIVISION PROTEIN A"/>
    <property type="match status" value="1"/>
</dbReference>
<dbReference type="PANTHER" id="PTHR11806:SF0">
    <property type="entry name" value="PROTEIN MTO1 HOMOLOG, MITOCHONDRIAL"/>
    <property type="match status" value="1"/>
</dbReference>
<dbReference type="Pfam" id="PF01134">
    <property type="entry name" value="GIDA"/>
    <property type="match status" value="1"/>
</dbReference>
<dbReference type="Pfam" id="PF21680">
    <property type="entry name" value="GIDA_C_1st"/>
    <property type="match status" value="1"/>
</dbReference>
<dbReference type="Pfam" id="PF13932">
    <property type="entry name" value="SAM_GIDA_C"/>
    <property type="match status" value="1"/>
</dbReference>
<dbReference type="SMART" id="SM01228">
    <property type="entry name" value="GIDA_assoc_3"/>
    <property type="match status" value="1"/>
</dbReference>
<dbReference type="SUPFAM" id="SSF51905">
    <property type="entry name" value="FAD/NAD(P)-binding domain"/>
    <property type="match status" value="1"/>
</dbReference>
<dbReference type="PROSITE" id="PS01280">
    <property type="entry name" value="GIDA_1"/>
    <property type="match status" value="1"/>
</dbReference>
<dbReference type="PROSITE" id="PS01281">
    <property type="entry name" value="GIDA_2"/>
    <property type="match status" value="1"/>
</dbReference>
<evidence type="ECO:0000255" key="1">
    <source>
        <dbReference type="HAMAP-Rule" id="MF_00129"/>
    </source>
</evidence>
<feature type="chain" id="PRO_1000016584" description="tRNA uridine 5-carboxymethylaminomethyl modification enzyme MnmG">
    <location>
        <begin position="1"/>
        <end position="632"/>
    </location>
</feature>
<feature type="binding site" evidence="1">
    <location>
        <begin position="14"/>
        <end position="19"/>
    </location>
    <ligand>
        <name>FAD</name>
        <dbReference type="ChEBI" id="CHEBI:57692"/>
    </ligand>
</feature>
<feature type="binding site" evidence="1">
    <location>
        <begin position="273"/>
        <end position="287"/>
    </location>
    <ligand>
        <name>NAD(+)</name>
        <dbReference type="ChEBI" id="CHEBI:57540"/>
    </ligand>
</feature>
<keyword id="KW-0963">Cytoplasm</keyword>
<keyword id="KW-0274">FAD</keyword>
<keyword id="KW-0285">Flavoprotein</keyword>
<keyword id="KW-0520">NAD</keyword>
<keyword id="KW-1185">Reference proteome</keyword>
<keyword id="KW-0819">tRNA processing</keyword>
<accession>A0PX78</accession>
<sequence length="632" mass="70897">MSYFAGEFDVAVIGAGHAGCEAALASARLGVSTVVFATDLASVAMMPCNPNIGGTAKGHLVREIDALGGEMGINIDHTYIQSRMLNTSKGPAVHSLRAQADKRKYAERMKHVLETTDNLHLKQAEIIKVDIEDSKVKGVLTKNGAYYKVKAAILCTGVYLKSRIIIGDINYEGGPSGLAPANMLSQSLIESGIKITRFKTGTPARINRRTVDFSKMIEQKGDENIVPFSFMSENIEREQISCYLTYSGDETKKVVLENIDRSPLYNGSIKSVGPRYCPSFEDKIMRFPEKDKHQIFIEPEGENTEEMYVGGMSSSLPEDVQLKMLRSVPGLENAEMMRTAYAIEYDCIDPTQLELSLEFKDIDGLFSAGQMNGSSGYEEAGCQGLIAGINAALKLQGKEPLILKRSDAYIGVLIDDLVTKGTQEPYRMMTSRAEYRLLLRQDNADLRLTEMGHKIGLVKEDRYERFTKRKTAIEDEIERLKNIQITNKQEVNKFLEGLNSAGLKKPISLYELIKRPELNYFVVKDLDKDRAELPRDVQEQVNIISKYEGYIQKQLEQVEQFKKLENRLIPKEFDYKLVKGLRTEAIQKLDKIKPVNIGQASRISGVSPADISVLLIVLEQYNRNKGHKEEEF</sequence>